<dbReference type="EC" id="2.7.1.6" evidence="1"/>
<dbReference type="EMBL" id="CP000720">
    <property type="protein sequence ID" value="ABS46993.1"/>
    <property type="molecule type" value="Genomic_DNA"/>
</dbReference>
<dbReference type="RefSeq" id="WP_002210748.1">
    <property type="nucleotide sequence ID" value="NC_009708.1"/>
</dbReference>
<dbReference type="SMR" id="A7FKP2"/>
<dbReference type="GeneID" id="57977277"/>
<dbReference type="KEGG" id="ypi:YpsIP31758_2857"/>
<dbReference type="HOGENOM" id="CLU_017814_2_1_6"/>
<dbReference type="UniPathway" id="UPA00214"/>
<dbReference type="Proteomes" id="UP000002412">
    <property type="component" value="Chromosome"/>
</dbReference>
<dbReference type="GO" id="GO:0005829">
    <property type="term" value="C:cytosol"/>
    <property type="evidence" value="ECO:0007669"/>
    <property type="project" value="TreeGrafter"/>
</dbReference>
<dbReference type="GO" id="GO:0005524">
    <property type="term" value="F:ATP binding"/>
    <property type="evidence" value="ECO:0007669"/>
    <property type="project" value="UniProtKB-UniRule"/>
</dbReference>
<dbReference type="GO" id="GO:0004335">
    <property type="term" value="F:galactokinase activity"/>
    <property type="evidence" value="ECO:0007669"/>
    <property type="project" value="UniProtKB-UniRule"/>
</dbReference>
<dbReference type="GO" id="GO:0000287">
    <property type="term" value="F:magnesium ion binding"/>
    <property type="evidence" value="ECO:0007669"/>
    <property type="project" value="UniProtKB-UniRule"/>
</dbReference>
<dbReference type="GO" id="GO:0006012">
    <property type="term" value="P:galactose metabolic process"/>
    <property type="evidence" value="ECO:0007669"/>
    <property type="project" value="UniProtKB-UniRule"/>
</dbReference>
<dbReference type="FunFam" id="3.30.230.10:FF:000017">
    <property type="entry name" value="Galactokinase"/>
    <property type="match status" value="1"/>
</dbReference>
<dbReference type="FunFam" id="3.30.70.890:FF:000001">
    <property type="entry name" value="Galactokinase"/>
    <property type="match status" value="1"/>
</dbReference>
<dbReference type="Gene3D" id="3.30.230.10">
    <property type="match status" value="1"/>
</dbReference>
<dbReference type="Gene3D" id="3.30.70.890">
    <property type="entry name" value="GHMP kinase, C-terminal domain"/>
    <property type="match status" value="1"/>
</dbReference>
<dbReference type="HAMAP" id="MF_00246">
    <property type="entry name" value="Galactokinase"/>
    <property type="match status" value="1"/>
</dbReference>
<dbReference type="InterPro" id="IPR000705">
    <property type="entry name" value="Galactokinase"/>
</dbReference>
<dbReference type="InterPro" id="IPR022963">
    <property type="entry name" value="Galactokinase_bac"/>
</dbReference>
<dbReference type="InterPro" id="IPR019741">
    <property type="entry name" value="Galactokinase_CS"/>
</dbReference>
<dbReference type="InterPro" id="IPR019539">
    <property type="entry name" value="GalKase_N"/>
</dbReference>
<dbReference type="InterPro" id="IPR013750">
    <property type="entry name" value="GHMP_kinase_C_dom"/>
</dbReference>
<dbReference type="InterPro" id="IPR036554">
    <property type="entry name" value="GHMP_kinase_C_sf"/>
</dbReference>
<dbReference type="InterPro" id="IPR006204">
    <property type="entry name" value="GHMP_kinase_N_dom"/>
</dbReference>
<dbReference type="InterPro" id="IPR006203">
    <property type="entry name" value="GHMP_knse_ATP-bd_CS"/>
</dbReference>
<dbReference type="InterPro" id="IPR006206">
    <property type="entry name" value="Mevalonate/galactokinase"/>
</dbReference>
<dbReference type="InterPro" id="IPR020568">
    <property type="entry name" value="Ribosomal_Su5_D2-typ_SF"/>
</dbReference>
<dbReference type="InterPro" id="IPR014721">
    <property type="entry name" value="Ribsml_uS5_D2-typ_fold_subgr"/>
</dbReference>
<dbReference type="NCBIfam" id="TIGR00131">
    <property type="entry name" value="gal_kin"/>
    <property type="match status" value="1"/>
</dbReference>
<dbReference type="NCBIfam" id="NF003472">
    <property type="entry name" value="PRK05101.1"/>
    <property type="match status" value="1"/>
</dbReference>
<dbReference type="PANTHER" id="PTHR10457:SF7">
    <property type="entry name" value="GALACTOKINASE-RELATED"/>
    <property type="match status" value="1"/>
</dbReference>
<dbReference type="PANTHER" id="PTHR10457">
    <property type="entry name" value="MEVALONATE KINASE/GALACTOKINASE"/>
    <property type="match status" value="1"/>
</dbReference>
<dbReference type="Pfam" id="PF10509">
    <property type="entry name" value="GalKase_gal_bdg"/>
    <property type="match status" value="1"/>
</dbReference>
<dbReference type="Pfam" id="PF08544">
    <property type="entry name" value="GHMP_kinases_C"/>
    <property type="match status" value="1"/>
</dbReference>
<dbReference type="Pfam" id="PF00288">
    <property type="entry name" value="GHMP_kinases_N"/>
    <property type="match status" value="1"/>
</dbReference>
<dbReference type="PIRSF" id="PIRSF000530">
    <property type="entry name" value="Galactokinase"/>
    <property type="match status" value="1"/>
</dbReference>
<dbReference type="PRINTS" id="PR00473">
    <property type="entry name" value="GALCTOKINASE"/>
</dbReference>
<dbReference type="PRINTS" id="PR00959">
    <property type="entry name" value="MEVGALKINASE"/>
</dbReference>
<dbReference type="SUPFAM" id="SSF55060">
    <property type="entry name" value="GHMP Kinase, C-terminal domain"/>
    <property type="match status" value="1"/>
</dbReference>
<dbReference type="SUPFAM" id="SSF54211">
    <property type="entry name" value="Ribosomal protein S5 domain 2-like"/>
    <property type="match status" value="1"/>
</dbReference>
<dbReference type="PROSITE" id="PS00106">
    <property type="entry name" value="GALACTOKINASE"/>
    <property type="match status" value="1"/>
</dbReference>
<dbReference type="PROSITE" id="PS00627">
    <property type="entry name" value="GHMP_KINASES_ATP"/>
    <property type="match status" value="1"/>
</dbReference>
<accession>A7FKP2</accession>
<organism>
    <name type="scientific">Yersinia pseudotuberculosis serotype O:1b (strain IP 31758)</name>
    <dbReference type="NCBI Taxonomy" id="349747"/>
    <lineage>
        <taxon>Bacteria</taxon>
        <taxon>Pseudomonadati</taxon>
        <taxon>Pseudomonadota</taxon>
        <taxon>Gammaproteobacteria</taxon>
        <taxon>Enterobacterales</taxon>
        <taxon>Yersiniaceae</taxon>
        <taxon>Yersinia</taxon>
    </lineage>
</organism>
<comment type="function">
    <text evidence="1">Catalyzes the transfer of the gamma-phosphate of ATP to D-galactose to form alpha-D-galactose-1-phosphate (Gal-1-P).</text>
</comment>
<comment type="catalytic activity">
    <reaction evidence="1">
        <text>alpha-D-galactose + ATP = alpha-D-galactose 1-phosphate + ADP + H(+)</text>
        <dbReference type="Rhea" id="RHEA:13553"/>
        <dbReference type="ChEBI" id="CHEBI:15378"/>
        <dbReference type="ChEBI" id="CHEBI:28061"/>
        <dbReference type="ChEBI" id="CHEBI:30616"/>
        <dbReference type="ChEBI" id="CHEBI:58336"/>
        <dbReference type="ChEBI" id="CHEBI:456216"/>
        <dbReference type="EC" id="2.7.1.6"/>
    </reaction>
</comment>
<comment type="pathway">
    <text evidence="1">Carbohydrate metabolism; galactose metabolism.</text>
</comment>
<comment type="subcellular location">
    <subcellularLocation>
        <location evidence="1">Cytoplasm</location>
    </subcellularLocation>
</comment>
<comment type="similarity">
    <text evidence="1">Belongs to the GHMP kinase family. GalK subfamily.</text>
</comment>
<reference key="1">
    <citation type="journal article" date="2007" name="PLoS Genet.">
        <title>The complete genome sequence of Yersinia pseudotuberculosis IP31758, the causative agent of Far East scarlet-like fever.</title>
        <authorList>
            <person name="Eppinger M."/>
            <person name="Rosovitz M.J."/>
            <person name="Fricke W.F."/>
            <person name="Rasko D.A."/>
            <person name="Kokorina G."/>
            <person name="Fayolle C."/>
            <person name="Lindler L.E."/>
            <person name="Carniel E."/>
            <person name="Ravel J."/>
        </authorList>
    </citation>
    <scope>NUCLEOTIDE SEQUENCE [LARGE SCALE GENOMIC DNA]</scope>
    <source>
        <strain>IP 31758</strain>
    </source>
</reference>
<protein>
    <recommendedName>
        <fullName evidence="1">Galactokinase</fullName>
        <ecNumber evidence="1">2.7.1.6</ecNumber>
    </recommendedName>
    <alternativeName>
        <fullName evidence="1">Galactose kinase</fullName>
    </alternativeName>
</protein>
<keyword id="KW-0067">ATP-binding</keyword>
<keyword id="KW-0119">Carbohydrate metabolism</keyword>
<keyword id="KW-0963">Cytoplasm</keyword>
<keyword id="KW-0299">Galactose metabolism</keyword>
<keyword id="KW-0418">Kinase</keyword>
<keyword id="KW-0460">Magnesium</keyword>
<keyword id="KW-0479">Metal-binding</keyword>
<keyword id="KW-0547">Nucleotide-binding</keyword>
<keyword id="KW-0808">Transferase</keyword>
<proteinExistence type="inferred from homology"/>
<gene>
    <name evidence="1" type="primary">galK</name>
    <name type="ordered locus">YpsIP31758_2857</name>
</gene>
<evidence type="ECO:0000255" key="1">
    <source>
        <dbReference type="HAMAP-Rule" id="MF_00246"/>
    </source>
</evidence>
<name>GAL1_YERP3</name>
<feature type="chain" id="PRO_1000059007" description="Galactokinase">
    <location>
        <begin position="1"/>
        <end position="383"/>
    </location>
</feature>
<feature type="active site" description="Proton acceptor" evidence="1">
    <location>
        <position position="174"/>
    </location>
</feature>
<feature type="binding site" evidence="1">
    <location>
        <begin position="34"/>
        <end position="37"/>
    </location>
    <ligand>
        <name>substrate</name>
    </ligand>
</feature>
<feature type="binding site" evidence="1">
    <location>
        <begin position="124"/>
        <end position="130"/>
    </location>
    <ligand>
        <name>ATP</name>
        <dbReference type="ChEBI" id="CHEBI:30616"/>
    </ligand>
</feature>
<feature type="binding site" evidence="1">
    <location>
        <position position="130"/>
    </location>
    <ligand>
        <name>Mg(2+)</name>
        <dbReference type="ChEBI" id="CHEBI:18420"/>
    </ligand>
</feature>
<feature type="binding site" evidence="1">
    <location>
        <position position="162"/>
    </location>
    <ligand>
        <name>Mg(2+)</name>
        <dbReference type="ChEBI" id="CHEBI:18420"/>
    </ligand>
</feature>
<feature type="binding site" evidence="1">
    <location>
        <position position="223"/>
    </location>
    <ligand>
        <name>substrate</name>
    </ligand>
</feature>
<feature type="site" description="Transition state stabilizer" evidence="1">
    <location>
        <position position="28"/>
    </location>
</feature>
<sequence length="383" mass="41866">MSLKQHTQTIFRQQFDRESDITIKAPGRVNLIGEHTDYNDGFVLPCAINYETVISCGKRDDRQIRVIAADYENQQDIFSLDAPIVPHPEYRWADYVRGVVKHLQMRNADFGGADLVICGNVPQGAGLSSSASLEVAVGQALQSLYQLPLSGVELALNGQEAENQFVGCNCGIMDQLISALGKKDHALLIDCRTLETRAVPMPENMAVVIINSNIQRGLVDSEYNTRRQQCEAAARFFGVKALRDVEPSLFFSIQDELDPVVAKRARHVISENARTLAAADALAAGNLKLMGQLMQESHISMRDDFEITVPPIDRLVEIVKSVIGDQGGVRMTGGGFGGCIIALMPLELVEQVRTTVAQEYPAHSGGKKETFYVCQASQGAGLC</sequence>